<sequence>MGWLSSIFWAFWYILPAYFANASPVLVGGGRPIDGGRVWRDGRRLLGDGKTWRGFIGGVLIGTLVGIVQYFITPDFYGSLETAVKLAFLLSFGALIGDLVGSFIKRRANLPRGYPAIGLDQLGFLISALAFAYPVKTLSSGQIIFLLVVSPFIHWGANYFAYRMGWKSVPW</sequence>
<gene>
    <name evidence="1" type="primary">carS</name>
    <name type="ordered locus">TK2119</name>
</gene>
<name>CDPAS_THEKO</name>
<keyword id="KW-1003">Cell membrane</keyword>
<keyword id="KW-0444">Lipid biosynthesis</keyword>
<keyword id="KW-0443">Lipid metabolism</keyword>
<keyword id="KW-0460">Magnesium</keyword>
<keyword id="KW-0472">Membrane</keyword>
<keyword id="KW-0594">Phospholipid biosynthesis</keyword>
<keyword id="KW-1208">Phospholipid metabolism</keyword>
<keyword id="KW-1185">Reference proteome</keyword>
<keyword id="KW-0808">Transferase</keyword>
<keyword id="KW-0812">Transmembrane</keyword>
<keyword id="KW-1133">Transmembrane helix</keyword>
<evidence type="ECO:0000255" key="1">
    <source>
        <dbReference type="HAMAP-Rule" id="MF_01117"/>
    </source>
</evidence>
<comment type="function">
    <text evidence="1">Catalyzes the formation of CDP-2,3-bis-(O-geranylgeranyl)-sn-glycerol (CDP-archaeol) from 2,3-bis-(O-geranylgeranyl)-sn-glycerol 1-phosphate (DGGGP) and CTP. This reaction is the third ether-bond-formation step in the biosynthesis of archaeal membrane lipids.</text>
</comment>
<comment type="catalytic activity">
    <reaction evidence="1">
        <text>2,3-bis-O-(geranylgeranyl)-sn-glycerol 1-phosphate + CTP + H(+) = CDP-2,3-bis-O-(geranylgeranyl)-sn-glycerol + diphosphate</text>
        <dbReference type="Rhea" id="RHEA:25690"/>
        <dbReference type="ChEBI" id="CHEBI:15378"/>
        <dbReference type="ChEBI" id="CHEBI:33019"/>
        <dbReference type="ChEBI" id="CHEBI:37563"/>
        <dbReference type="ChEBI" id="CHEBI:58837"/>
        <dbReference type="ChEBI" id="CHEBI:58838"/>
        <dbReference type="EC" id="2.7.7.67"/>
    </reaction>
</comment>
<comment type="cofactor">
    <cofactor evidence="1">
        <name>Mg(2+)</name>
        <dbReference type="ChEBI" id="CHEBI:18420"/>
    </cofactor>
</comment>
<comment type="pathway">
    <text evidence="1">Membrane lipid metabolism; glycerophospholipid metabolism.</text>
</comment>
<comment type="subcellular location">
    <subcellularLocation>
        <location evidence="1">Cell membrane</location>
        <topology evidence="1">Multi-pass membrane protein</topology>
    </subcellularLocation>
</comment>
<comment type="similarity">
    <text evidence="1">Belongs to the CDP-archaeol synthase family.</text>
</comment>
<reference key="1">
    <citation type="journal article" date="2005" name="Genome Res.">
        <title>Complete genome sequence of the hyperthermophilic archaeon Thermococcus kodakaraensis KOD1 and comparison with Pyrococcus genomes.</title>
        <authorList>
            <person name="Fukui T."/>
            <person name="Atomi H."/>
            <person name="Kanai T."/>
            <person name="Matsumi R."/>
            <person name="Fujiwara S."/>
            <person name="Imanaka T."/>
        </authorList>
    </citation>
    <scope>NUCLEOTIDE SEQUENCE [LARGE SCALE GENOMIC DNA]</scope>
    <source>
        <strain>ATCC BAA-918 / JCM 12380 / KOD1</strain>
    </source>
</reference>
<organism>
    <name type="scientific">Thermococcus kodakarensis (strain ATCC BAA-918 / JCM 12380 / KOD1)</name>
    <name type="common">Pyrococcus kodakaraensis (strain KOD1)</name>
    <dbReference type="NCBI Taxonomy" id="69014"/>
    <lineage>
        <taxon>Archaea</taxon>
        <taxon>Methanobacteriati</taxon>
        <taxon>Methanobacteriota</taxon>
        <taxon>Thermococci</taxon>
        <taxon>Thermococcales</taxon>
        <taxon>Thermococcaceae</taxon>
        <taxon>Thermococcus</taxon>
    </lineage>
</organism>
<accession>Q5JEX0</accession>
<protein>
    <recommendedName>
        <fullName evidence="1">CDP-archaeol synthase</fullName>
        <ecNumber evidence="1">2.7.7.67</ecNumber>
    </recommendedName>
    <alternativeName>
        <fullName evidence="1">CDP-2,3-bis-(O-geranylgeranyl)-sn-glycerol synthase</fullName>
    </alternativeName>
</protein>
<proteinExistence type="inferred from homology"/>
<dbReference type="EC" id="2.7.7.67" evidence="1"/>
<dbReference type="EMBL" id="AP006878">
    <property type="protein sequence ID" value="BAD86308.1"/>
    <property type="molecule type" value="Genomic_DNA"/>
</dbReference>
<dbReference type="RefSeq" id="WP_011251069.1">
    <property type="nucleotide sequence ID" value="NC_006624.1"/>
</dbReference>
<dbReference type="SMR" id="Q5JEX0"/>
<dbReference type="FunCoup" id="Q5JEX0">
    <property type="interactions" value="1"/>
</dbReference>
<dbReference type="STRING" id="69014.TK2119"/>
<dbReference type="EnsemblBacteria" id="BAD86308">
    <property type="protein sequence ID" value="BAD86308"/>
    <property type="gene ID" value="TK2119"/>
</dbReference>
<dbReference type="GeneID" id="78448654"/>
<dbReference type="KEGG" id="tko:TK2119"/>
<dbReference type="PATRIC" id="fig|69014.16.peg.2075"/>
<dbReference type="eggNOG" id="arCOG04106">
    <property type="taxonomic scope" value="Archaea"/>
</dbReference>
<dbReference type="HOGENOM" id="CLU_105710_0_0_2"/>
<dbReference type="InParanoid" id="Q5JEX0"/>
<dbReference type="OrthoDB" id="45383at2157"/>
<dbReference type="PhylomeDB" id="Q5JEX0"/>
<dbReference type="UniPathway" id="UPA00940"/>
<dbReference type="Proteomes" id="UP000000536">
    <property type="component" value="Chromosome"/>
</dbReference>
<dbReference type="GO" id="GO:0005886">
    <property type="term" value="C:plasma membrane"/>
    <property type="evidence" value="ECO:0007669"/>
    <property type="project" value="UniProtKB-SubCell"/>
</dbReference>
<dbReference type="GO" id="GO:0043338">
    <property type="term" value="F:CDP-2,3-bis-(O-geranylgeranyl)-sn-glycerol synthase activity"/>
    <property type="evidence" value="ECO:0007669"/>
    <property type="project" value="UniProtKB-EC"/>
</dbReference>
<dbReference type="GO" id="GO:0046474">
    <property type="term" value="P:glycerophospholipid biosynthetic process"/>
    <property type="evidence" value="ECO:0007669"/>
    <property type="project" value="UniProtKB-UniRule"/>
</dbReference>
<dbReference type="HAMAP" id="MF_01117">
    <property type="entry name" value="CDP_archaeol_synth"/>
    <property type="match status" value="1"/>
</dbReference>
<dbReference type="InterPro" id="IPR032690">
    <property type="entry name" value="CarS"/>
</dbReference>
<dbReference type="InterPro" id="IPR002726">
    <property type="entry name" value="CarS_archaea"/>
</dbReference>
<dbReference type="NCBIfam" id="NF003114">
    <property type="entry name" value="PRK04032.1"/>
    <property type="match status" value="1"/>
</dbReference>
<dbReference type="PANTHER" id="PTHR39650">
    <property type="entry name" value="CDP-ARCHAEOL SYNTHASE"/>
    <property type="match status" value="1"/>
</dbReference>
<dbReference type="PANTHER" id="PTHR39650:SF1">
    <property type="entry name" value="CDP-ARCHAEOL SYNTHASE"/>
    <property type="match status" value="1"/>
</dbReference>
<dbReference type="Pfam" id="PF01864">
    <property type="entry name" value="CarS-like"/>
    <property type="match status" value="1"/>
</dbReference>
<feature type="chain" id="PRO_0000094178" description="CDP-archaeol synthase">
    <location>
        <begin position="1"/>
        <end position="171"/>
    </location>
</feature>
<feature type="transmembrane region" description="Helical" evidence="1">
    <location>
        <begin position="7"/>
        <end position="27"/>
    </location>
</feature>
<feature type="transmembrane region" description="Helical" evidence="1">
    <location>
        <begin position="54"/>
        <end position="74"/>
    </location>
</feature>
<feature type="transmembrane region" description="Helical" evidence="1">
    <location>
        <begin position="84"/>
        <end position="104"/>
    </location>
</feature>
<feature type="transmembrane region" description="Helical" evidence="1">
    <location>
        <begin position="115"/>
        <end position="135"/>
    </location>
</feature>
<feature type="transmembrane region" description="Helical" evidence="1">
    <location>
        <begin position="141"/>
        <end position="161"/>
    </location>
</feature>